<reference key="1">
    <citation type="submission" date="2008-06" db="EMBL/GenBank/DDBJ databases">
        <title>Complete sequence of Chlorobium phaeobacteroides BS1.</title>
        <authorList>
            <consortium name="US DOE Joint Genome Institute"/>
            <person name="Lucas S."/>
            <person name="Copeland A."/>
            <person name="Lapidus A."/>
            <person name="Glavina del Rio T."/>
            <person name="Dalin E."/>
            <person name="Tice H."/>
            <person name="Bruce D."/>
            <person name="Goodwin L."/>
            <person name="Pitluck S."/>
            <person name="Schmutz J."/>
            <person name="Larimer F."/>
            <person name="Land M."/>
            <person name="Hauser L."/>
            <person name="Kyrpides N."/>
            <person name="Ovchinnikova G."/>
            <person name="Li T."/>
            <person name="Liu Z."/>
            <person name="Zhao F."/>
            <person name="Overmann J."/>
            <person name="Bryant D.A."/>
            <person name="Richardson P."/>
        </authorList>
    </citation>
    <scope>NUCLEOTIDE SEQUENCE [LARGE SCALE GENOMIC DNA]</scope>
    <source>
        <strain>BS1</strain>
    </source>
</reference>
<protein>
    <recommendedName>
        <fullName evidence="1">Light-independent protochlorophyllide reductase iron-sulfur ATP-binding protein</fullName>
        <shortName evidence="1">DPOR subunit L</shortName>
        <shortName evidence="1">LI-POR subunit L</shortName>
        <ecNumber evidence="1">1.3.7.7</ecNumber>
    </recommendedName>
</protein>
<evidence type="ECO:0000255" key="1">
    <source>
        <dbReference type="HAMAP-Rule" id="MF_00355"/>
    </source>
</evidence>
<proteinExistence type="inferred from homology"/>
<feature type="chain" id="PRO_1000120552" description="Light-independent protochlorophyllide reductase iron-sulfur ATP-binding protein">
    <location>
        <begin position="1"/>
        <end position="275"/>
    </location>
</feature>
<feature type="binding site" evidence="1">
    <location>
        <begin position="12"/>
        <end position="17"/>
    </location>
    <ligand>
        <name>ATP</name>
        <dbReference type="ChEBI" id="CHEBI:30616"/>
    </ligand>
</feature>
<feature type="binding site" evidence="1">
    <location>
        <position position="16"/>
    </location>
    <ligand>
        <name>Mg(2+)</name>
        <dbReference type="ChEBI" id="CHEBI:18420"/>
    </ligand>
</feature>
<feature type="binding site" evidence="1">
    <location>
        <position position="41"/>
    </location>
    <ligand>
        <name>ATP</name>
        <dbReference type="ChEBI" id="CHEBI:30616"/>
    </ligand>
</feature>
<feature type="binding site" evidence="1">
    <location>
        <position position="97"/>
    </location>
    <ligand>
        <name>[4Fe-4S] cluster</name>
        <dbReference type="ChEBI" id="CHEBI:49883"/>
        <note>ligand shared between dimeric partners</note>
    </ligand>
</feature>
<feature type="binding site" evidence="1">
    <location>
        <position position="131"/>
    </location>
    <ligand>
        <name>[4Fe-4S] cluster</name>
        <dbReference type="ChEBI" id="CHEBI:49883"/>
        <note>ligand shared between dimeric partners</note>
    </ligand>
</feature>
<feature type="binding site" evidence="1">
    <location>
        <begin position="182"/>
        <end position="183"/>
    </location>
    <ligand>
        <name>ATP</name>
        <dbReference type="ChEBI" id="CHEBI:30616"/>
    </ligand>
</feature>
<sequence length="275" mass="29591">MSLILAVYGKGGIGKSTTTANISAALALKGAKVLQIGCDPKHDSTFPLTGTLQKTVIEALEEVDFHHEELTEEDIILTGFGGVDALEAGGPPAGSGCGGYVVGEAVKLLQELGVYDRYDVILFDVLGDVVCGGFSAPLNFADYAVIIATNDFDSIFAANRLCMAIEQKSTRYKVKLAGIVANRVDYVKGGGTNMLEQFSDKVGTKLLARVPYHELIRKSRFAGKTMFQMEDGPEKEECVKPYNEIADFLLSRNPTSSVPVPIGDRDIFEIVGGWQ</sequence>
<gene>
    <name evidence="1" type="primary">bchL</name>
    <name type="ordered locus">Cphamn1_2258</name>
</gene>
<organism>
    <name type="scientific">Chlorobium phaeobacteroides (strain BS1)</name>
    <dbReference type="NCBI Taxonomy" id="331678"/>
    <lineage>
        <taxon>Bacteria</taxon>
        <taxon>Pseudomonadati</taxon>
        <taxon>Chlorobiota</taxon>
        <taxon>Chlorobiia</taxon>
        <taxon>Chlorobiales</taxon>
        <taxon>Chlorobiaceae</taxon>
        <taxon>Chlorobium/Pelodictyon group</taxon>
        <taxon>Chlorobium</taxon>
    </lineage>
</organism>
<dbReference type="EC" id="1.3.7.7" evidence="1"/>
<dbReference type="EMBL" id="CP001101">
    <property type="protein sequence ID" value="ACE05162.1"/>
    <property type="molecule type" value="Genomic_DNA"/>
</dbReference>
<dbReference type="SMR" id="B3ENS3"/>
<dbReference type="STRING" id="331678.Cphamn1_2258"/>
<dbReference type="KEGG" id="cpb:Cphamn1_2258"/>
<dbReference type="eggNOG" id="COG1348">
    <property type="taxonomic scope" value="Bacteria"/>
</dbReference>
<dbReference type="HOGENOM" id="CLU_059373_2_0_10"/>
<dbReference type="OrthoDB" id="9778641at2"/>
<dbReference type="UniPathway" id="UPA00671"/>
<dbReference type="GO" id="GO:0051539">
    <property type="term" value="F:4 iron, 4 sulfur cluster binding"/>
    <property type="evidence" value="ECO:0007669"/>
    <property type="project" value="UniProtKB-UniRule"/>
</dbReference>
<dbReference type="GO" id="GO:0005524">
    <property type="term" value="F:ATP binding"/>
    <property type="evidence" value="ECO:0007669"/>
    <property type="project" value="UniProtKB-UniRule"/>
</dbReference>
<dbReference type="GO" id="GO:0046872">
    <property type="term" value="F:metal ion binding"/>
    <property type="evidence" value="ECO:0007669"/>
    <property type="project" value="UniProtKB-KW"/>
</dbReference>
<dbReference type="GO" id="GO:0016730">
    <property type="term" value="F:oxidoreductase activity, acting on iron-sulfur proteins as donors"/>
    <property type="evidence" value="ECO:0007669"/>
    <property type="project" value="InterPro"/>
</dbReference>
<dbReference type="GO" id="GO:0016636">
    <property type="term" value="F:oxidoreductase activity, acting on the CH-CH group of donors, iron-sulfur protein as acceptor"/>
    <property type="evidence" value="ECO:0007669"/>
    <property type="project" value="UniProtKB-UniRule"/>
</dbReference>
<dbReference type="GO" id="GO:0036070">
    <property type="term" value="P:light-independent bacteriochlorophyll biosynthetic process"/>
    <property type="evidence" value="ECO:0007669"/>
    <property type="project" value="UniProtKB-UniRule"/>
</dbReference>
<dbReference type="GO" id="GO:0019685">
    <property type="term" value="P:photosynthesis, dark reaction"/>
    <property type="evidence" value="ECO:0007669"/>
    <property type="project" value="InterPro"/>
</dbReference>
<dbReference type="Gene3D" id="3.40.50.300">
    <property type="entry name" value="P-loop containing nucleotide triphosphate hydrolases"/>
    <property type="match status" value="1"/>
</dbReference>
<dbReference type="HAMAP" id="MF_00355">
    <property type="entry name" value="ChlL_BchL"/>
    <property type="match status" value="1"/>
</dbReference>
<dbReference type="InterPro" id="IPR030655">
    <property type="entry name" value="NifH/chlL_CS"/>
</dbReference>
<dbReference type="InterPro" id="IPR000392">
    <property type="entry name" value="NifH/frxC"/>
</dbReference>
<dbReference type="InterPro" id="IPR027417">
    <property type="entry name" value="P-loop_NTPase"/>
</dbReference>
<dbReference type="InterPro" id="IPR005971">
    <property type="entry name" value="Protochlorophyllide_ATP-bd"/>
</dbReference>
<dbReference type="NCBIfam" id="TIGR01281">
    <property type="entry name" value="DPOR_bchL"/>
    <property type="match status" value="1"/>
</dbReference>
<dbReference type="PANTHER" id="PTHR42864">
    <property type="entry name" value="LIGHT-INDEPENDENT PROTOCHLOROPHYLLIDE REDUCTASE IRON-SULFUR ATP-BINDING PROTEIN"/>
    <property type="match status" value="1"/>
</dbReference>
<dbReference type="PANTHER" id="PTHR42864:SF2">
    <property type="entry name" value="LIGHT-INDEPENDENT PROTOCHLOROPHYLLIDE REDUCTASE IRON-SULFUR ATP-BINDING PROTEIN"/>
    <property type="match status" value="1"/>
</dbReference>
<dbReference type="Pfam" id="PF00142">
    <property type="entry name" value="Fer4_NifH"/>
    <property type="match status" value="1"/>
</dbReference>
<dbReference type="PIRSF" id="PIRSF000363">
    <property type="entry name" value="Nitrogenase_iron"/>
    <property type="match status" value="1"/>
</dbReference>
<dbReference type="PRINTS" id="PR00091">
    <property type="entry name" value="NITROGNASEII"/>
</dbReference>
<dbReference type="SUPFAM" id="SSF52540">
    <property type="entry name" value="P-loop containing nucleoside triphosphate hydrolases"/>
    <property type="match status" value="1"/>
</dbReference>
<dbReference type="PROSITE" id="PS00746">
    <property type="entry name" value="NIFH_FRXC_1"/>
    <property type="match status" value="1"/>
</dbReference>
<dbReference type="PROSITE" id="PS00692">
    <property type="entry name" value="NIFH_FRXC_2"/>
    <property type="match status" value="1"/>
</dbReference>
<dbReference type="PROSITE" id="PS51026">
    <property type="entry name" value="NIFH_FRXC_3"/>
    <property type="match status" value="1"/>
</dbReference>
<keyword id="KW-0004">4Fe-4S</keyword>
<keyword id="KW-0067">ATP-binding</keyword>
<keyword id="KW-0077">Bacteriochlorophyll biosynthesis</keyword>
<keyword id="KW-0149">Chlorophyll biosynthesis</keyword>
<keyword id="KW-0408">Iron</keyword>
<keyword id="KW-0411">Iron-sulfur</keyword>
<keyword id="KW-0460">Magnesium</keyword>
<keyword id="KW-0479">Metal-binding</keyword>
<keyword id="KW-0547">Nucleotide-binding</keyword>
<keyword id="KW-0560">Oxidoreductase</keyword>
<keyword id="KW-0602">Photosynthesis</keyword>
<accession>B3ENS3</accession>
<name>BCHL_CHLPB</name>
<comment type="function">
    <text evidence="1">Component of the dark-operative protochlorophyllide reductase (DPOR) that uses Mg-ATP and reduced ferredoxin to reduce ring D of protochlorophyllide (Pchlide) to form chlorophyllide a (Chlide). This reaction is light-independent. The L component serves as a unique electron donor to the NB-component of the complex, and binds Mg-ATP.</text>
</comment>
<comment type="catalytic activity">
    <reaction evidence="1">
        <text>chlorophyllide a + oxidized 2[4Fe-4S]-[ferredoxin] + 2 ADP + 2 phosphate = protochlorophyllide a + reduced 2[4Fe-4S]-[ferredoxin] + 2 ATP + 2 H2O</text>
        <dbReference type="Rhea" id="RHEA:28202"/>
        <dbReference type="Rhea" id="RHEA-COMP:10002"/>
        <dbReference type="Rhea" id="RHEA-COMP:10004"/>
        <dbReference type="ChEBI" id="CHEBI:15377"/>
        <dbReference type="ChEBI" id="CHEBI:30616"/>
        <dbReference type="ChEBI" id="CHEBI:33722"/>
        <dbReference type="ChEBI" id="CHEBI:33723"/>
        <dbReference type="ChEBI" id="CHEBI:43474"/>
        <dbReference type="ChEBI" id="CHEBI:83348"/>
        <dbReference type="ChEBI" id="CHEBI:83350"/>
        <dbReference type="ChEBI" id="CHEBI:456216"/>
        <dbReference type="EC" id="1.3.7.7"/>
    </reaction>
</comment>
<comment type="cofactor">
    <cofactor evidence="1">
        <name>[4Fe-4S] cluster</name>
        <dbReference type="ChEBI" id="CHEBI:49883"/>
    </cofactor>
    <text evidence="1">Binds 1 [4Fe-4S] cluster per dimer.</text>
</comment>
<comment type="pathway">
    <text evidence="1">Porphyrin-containing compound metabolism; bacteriochlorophyll biosynthesis (light-independent).</text>
</comment>
<comment type="subunit">
    <text evidence="1">Homodimer. Protochlorophyllide reductase is composed of three subunits; BchL, BchN and BchB.</text>
</comment>
<comment type="similarity">
    <text evidence="1">Belongs to the NifH/BchL/ChlL family.</text>
</comment>